<sequence length="504" mass="59417">MEEFQGYLELDRFRQHDFLYPLIFREYIXXXAHDHGLNRVILLENLAYDNKSSLLIVKRLITRMYQQNHLMISANDSNQNRFLGYNKNLYSQMISEGFSIIAEIPYSLRLISSLEGAQIIRSYNLRSIHSIFPFLEDKFPHLNYVADVLIPYPIHLEILVQTLRYRVKDASSLHLLRFFLHEYSNGNILFILNKSISIFSKSNSRLLLFLYNSYICEYESLFLFLRNQSSHLRLTSSGVLFERIYLHRKMGDLAEVFVNDFRGILCFLKDPFIHYVRYQGKSILSSKDTPLLMNKWKYYLVSLWQCHFYVWSHPGRIYINQLSKHSLDFLGYFSNVPLNPSMVPSQMLENSFVINNAPKKLDTIVPIIPLIGSLAKAKFCNALGHPISKPTWADLSDFDIINRFVRICKNLSHYYSGSSKKKGMYRIKYILRLSCVKTLARKHKSTIRAFLKRLGSELFEEFFTEEEEFLSLIFPRTSFTLRRLYRGRVWYLDIICMNGLANHE</sequence>
<evidence type="ECO:0000255" key="1">
    <source>
        <dbReference type="HAMAP-Rule" id="MF_01390"/>
    </source>
</evidence>
<organism>
    <name type="scientific">Carpinus orientalis</name>
    <name type="common">Oriental hornbeam</name>
    <dbReference type="NCBI Taxonomy" id="175951"/>
    <lineage>
        <taxon>Eukaryota</taxon>
        <taxon>Viridiplantae</taxon>
        <taxon>Streptophyta</taxon>
        <taxon>Embryophyta</taxon>
        <taxon>Tracheophyta</taxon>
        <taxon>Spermatophyta</taxon>
        <taxon>Magnoliopsida</taxon>
        <taxon>eudicotyledons</taxon>
        <taxon>Gunneridae</taxon>
        <taxon>Pentapetalae</taxon>
        <taxon>rosids</taxon>
        <taxon>fabids</taxon>
        <taxon>Fagales</taxon>
        <taxon>Betulaceae</taxon>
        <taxon>Carpinus</taxon>
    </lineage>
</organism>
<protein>
    <recommendedName>
        <fullName evidence="1">Maturase K</fullName>
    </recommendedName>
    <alternativeName>
        <fullName evidence="1">Intron maturase</fullName>
    </alternativeName>
</protein>
<proteinExistence type="inferred from homology"/>
<accession>P68748</accession>
<accession>Q8W7V1</accession>
<reference key="1">
    <citation type="submission" date="2001-10" db="EMBL/GenBank/DDBJ databases">
        <title>Chloroplast DNA phylogeography of the hornbeam in Europe: evidence for a bottleneck at the outset of postglacial colonization.</title>
        <authorList>
            <person name="Grivet D."/>
            <person name="Petit R.J."/>
        </authorList>
    </citation>
    <scope>NUCLEOTIDE SEQUENCE [GENOMIC DNA]</scope>
    <source>
        <strain>Isolate 37CO04</strain>
    </source>
</reference>
<geneLocation type="chloroplast"/>
<feature type="chain" id="PRO_0000143312" description="Maturase K">
    <location>
        <begin position="1"/>
        <end position="504"/>
    </location>
</feature>
<comment type="function">
    <text evidence="1">Usually encoded in the trnK tRNA gene intron. Probably assists in splicing its own and other chloroplast group II introns.</text>
</comment>
<comment type="subcellular location">
    <subcellularLocation>
        <location>Plastid</location>
        <location>Chloroplast</location>
    </subcellularLocation>
</comment>
<comment type="similarity">
    <text evidence="1">Belongs to the intron maturase 2 family. MatK subfamily.</text>
</comment>
<dbReference type="EMBL" id="AJ417516">
    <property type="protein sequence ID" value="CAD10365.1"/>
    <property type="molecule type" value="Genomic_DNA"/>
</dbReference>
<dbReference type="GO" id="GO:0009507">
    <property type="term" value="C:chloroplast"/>
    <property type="evidence" value="ECO:0007669"/>
    <property type="project" value="UniProtKB-SubCell"/>
</dbReference>
<dbReference type="GO" id="GO:0003723">
    <property type="term" value="F:RNA binding"/>
    <property type="evidence" value="ECO:0007669"/>
    <property type="project" value="UniProtKB-KW"/>
</dbReference>
<dbReference type="GO" id="GO:0006397">
    <property type="term" value="P:mRNA processing"/>
    <property type="evidence" value="ECO:0007669"/>
    <property type="project" value="UniProtKB-KW"/>
</dbReference>
<dbReference type="GO" id="GO:0008380">
    <property type="term" value="P:RNA splicing"/>
    <property type="evidence" value="ECO:0007669"/>
    <property type="project" value="UniProtKB-UniRule"/>
</dbReference>
<dbReference type="GO" id="GO:0008033">
    <property type="term" value="P:tRNA processing"/>
    <property type="evidence" value="ECO:0007669"/>
    <property type="project" value="UniProtKB-KW"/>
</dbReference>
<dbReference type="HAMAP" id="MF_01390">
    <property type="entry name" value="MatK"/>
    <property type="match status" value="1"/>
</dbReference>
<dbReference type="InterPro" id="IPR024937">
    <property type="entry name" value="Domain_X"/>
</dbReference>
<dbReference type="InterPro" id="IPR002866">
    <property type="entry name" value="Maturase_MatK"/>
</dbReference>
<dbReference type="InterPro" id="IPR024942">
    <property type="entry name" value="Maturase_MatK_N"/>
</dbReference>
<dbReference type="PANTHER" id="PTHR34811">
    <property type="entry name" value="MATURASE K"/>
    <property type="match status" value="1"/>
</dbReference>
<dbReference type="PANTHER" id="PTHR34811:SF1">
    <property type="entry name" value="MATURASE K"/>
    <property type="match status" value="1"/>
</dbReference>
<dbReference type="Pfam" id="PF01348">
    <property type="entry name" value="Intron_maturas2"/>
    <property type="match status" value="1"/>
</dbReference>
<dbReference type="Pfam" id="PF01824">
    <property type="entry name" value="MatK_N"/>
    <property type="match status" value="1"/>
</dbReference>
<keyword id="KW-0150">Chloroplast</keyword>
<keyword id="KW-0507">mRNA processing</keyword>
<keyword id="KW-0934">Plastid</keyword>
<keyword id="KW-0694">RNA-binding</keyword>
<keyword id="KW-0819">tRNA processing</keyword>
<gene>
    <name evidence="1" type="primary">matK</name>
</gene>
<name>MATK_CAROR</name>